<name>GALR_PSEPK</name>
<sequence length="397" mass="43255">MIDVELPNLMQVRAFIRVAELGSVSRATEVLFRAQSVVTRAIAELEARFAVPLFERHANGMRLTDYGECLLPRAQRVLAELDGVPSLLGTAQGEPLYLFQARRLQVFVKLCETRHMQTVARHFGLSQPAVSAALKVLEGGCGQPLFVRTSRGLQPTVASRDILFPIRRALNELRLLDSDLSAMQGTLRGVVHVGALPLGRSRILPDAILRFTAQHPQVRVVTNESPFDLLATELRVGDVDFVLGALRPHDYASDLVGEPLINEEMVVLARRGHPLLHTHLTLKGVHQARWVLPRAGSPARQLLDNCFAAAGLTAPWPVVESADLAVIRGLLVRSDMLAAVSAHQLAYEIASGELQRLPLALPGTARAIGLMQRSGCLQSPAAVALMACIRQVITEQA</sequence>
<dbReference type="EMBL" id="AE015451">
    <property type="protein sequence ID" value="AAN68128.1"/>
    <property type="molecule type" value="Genomic_DNA"/>
</dbReference>
<dbReference type="RefSeq" id="NP_744664.1">
    <property type="nucleotide sequence ID" value="NC_002947.4"/>
</dbReference>
<dbReference type="RefSeq" id="WP_010953450.1">
    <property type="nucleotide sequence ID" value="NZ_CP169744.1"/>
</dbReference>
<dbReference type="SMR" id="Q88JX7"/>
<dbReference type="STRING" id="160488.PP_2516"/>
<dbReference type="PaxDb" id="160488-PP_2516"/>
<dbReference type="KEGG" id="ppu:PP_2516"/>
<dbReference type="PATRIC" id="fig|160488.4.peg.2671"/>
<dbReference type="eggNOG" id="COG0583">
    <property type="taxonomic scope" value="Bacteria"/>
</dbReference>
<dbReference type="HOGENOM" id="CLU_039613_6_0_6"/>
<dbReference type="OrthoDB" id="5914299at2"/>
<dbReference type="PhylomeDB" id="Q88JX7"/>
<dbReference type="BioCyc" id="PPUT160488:G1G01-2700-MONOMER"/>
<dbReference type="Proteomes" id="UP000000556">
    <property type="component" value="Chromosome"/>
</dbReference>
<dbReference type="GO" id="GO:0005829">
    <property type="term" value="C:cytosol"/>
    <property type="evidence" value="ECO:0007669"/>
    <property type="project" value="TreeGrafter"/>
</dbReference>
<dbReference type="GO" id="GO:0003677">
    <property type="term" value="F:DNA binding"/>
    <property type="evidence" value="ECO:0007669"/>
    <property type="project" value="UniProtKB-KW"/>
</dbReference>
<dbReference type="GO" id="GO:0003700">
    <property type="term" value="F:DNA-binding transcription factor activity"/>
    <property type="evidence" value="ECO:0007669"/>
    <property type="project" value="InterPro"/>
</dbReference>
<dbReference type="GO" id="GO:0009056">
    <property type="term" value="P:catabolic process"/>
    <property type="evidence" value="ECO:0007669"/>
    <property type="project" value="UniProtKB-KW"/>
</dbReference>
<dbReference type="FunFam" id="1.10.10.10:FF:000001">
    <property type="entry name" value="LysR family transcriptional regulator"/>
    <property type="match status" value="1"/>
</dbReference>
<dbReference type="Gene3D" id="3.40.190.290">
    <property type="match status" value="1"/>
</dbReference>
<dbReference type="Gene3D" id="1.10.10.10">
    <property type="entry name" value="Winged helix-like DNA-binding domain superfamily/Winged helix DNA-binding domain"/>
    <property type="match status" value="2"/>
</dbReference>
<dbReference type="InterPro" id="IPR050950">
    <property type="entry name" value="HTH-type_LysR_regulators"/>
</dbReference>
<dbReference type="InterPro" id="IPR005119">
    <property type="entry name" value="LysR_subst-bd"/>
</dbReference>
<dbReference type="InterPro" id="IPR000847">
    <property type="entry name" value="Tscrpt_reg_HTH_LysR"/>
</dbReference>
<dbReference type="InterPro" id="IPR036388">
    <property type="entry name" value="WH-like_DNA-bd_sf"/>
</dbReference>
<dbReference type="InterPro" id="IPR036390">
    <property type="entry name" value="WH_DNA-bd_sf"/>
</dbReference>
<dbReference type="PANTHER" id="PTHR30419">
    <property type="entry name" value="HTH-TYPE TRANSCRIPTIONAL REGULATOR YBHD"/>
    <property type="match status" value="1"/>
</dbReference>
<dbReference type="PANTHER" id="PTHR30419:SF8">
    <property type="entry name" value="NITROGEN ASSIMILATION TRANSCRIPTIONAL ACTIVATOR-RELATED"/>
    <property type="match status" value="1"/>
</dbReference>
<dbReference type="Pfam" id="PF00126">
    <property type="entry name" value="HTH_1"/>
    <property type="match status" value="2"/>
</dbReference>
<dbReference type="Pfam" id="PF03466">
    <property type="entry name" value="LysR_substrate"/>
    <property type="match status" value="1"/>
</dbReference>
<dbReference type="SUPFAM" id="SSF53850">
    <property type="entry name" value="Periplasmic binding protein-like II"/>
    <property type="match status" value="1"/>
</dbReference>
<dbReference type="SUPFAM" id="SSF46785">
    <property type="entry name" value="Winged helix' DNA-binding domain"/>
    <property type="match status" value="2"/>
</dbReference>
<dbReference type="PROSITE" id="PS50931">
    <property type="entry name" value="HTH_LYSR"/>
    <property type="match status" value="2"/>
</dbReference>
<evidence type="ECO:0000255" key="1">
    <source>
        <dbReference type="PROSITE-ProRule" id="PRU00253"/>
    </source>
</evidence>
<evidence type="ECO:0000269" key="2">
    <source>
    </source>
</evidence>
<evidence type="ECO:0000305" key="3"/>
<reference key="1">
    <citation type="journal article" date="2002" name="Environ. Microbiol.">
        <title>Complete genome sequence and comparative analysis of the metabolically versatile Pseudomonas putida KT2440.</title>
        <authorList>
            <person name="Nelson K.E."/>
            <person name="Weinel C."/>
            <person name="Paulsen I.T."/>
            <person name="Dodson R.J."/>
            <person name="Hilbert H."/>
            <person name="Martins dos Santos V.A.P."/>
            <person name="Fouts D.E."/>
            <person name="Gill S.R."/>
            <person name="Pop M."/>
            <person name="Holmes M."/>
            <person name="Brinkac L.M."/>
            <person name="Beanan M.J."/>
            <person name="DeBoy R.T."/>
            <person name="Daugherty S.C."/>
            <person name="Kolonay J.F."/>
            <person name="Madupu R."/>
            <person name="Nelson W.C."/>
            <person name="White O."/>
            <person name="Peterson J.D."/>
            <person name="Khouri H.M."/>
            <person name="Hance I."/>
            <person name="Chris Lee P."/>
            <person name="Holtzapple E.K."/>
            <person name="Scanlan D."/>
            <person name="Tran K."/>
            <person name="Moazzez A."/>
            <person name="Utterback T.R."/>
            <person name="Rizzo M."/>
            <person name="Lee K."/>
            <person name="Kosack D."/>
            <person name="Moestl D."/>
            <person name="Wedler H."/>
            <person name="Lauber J."/>
            <person name="Stjepandic D."/>
            <person name="Hoheisel J."/>
            <person name="Straetz M."/>
            <person name="Heim S."/>
            <person name="Kiewitz C."/>
            <person name="Eisen J.A."/>
            <person name="Timmis K.N."/>
            <person name="Duesterhoeft A."/>
            <person name="Tuemmler B."/>
            <person name="Fraser C.M."/>
        </authorList>
    </citation>
    <scope>NUCLEOTIDE SEQUENCE [LARGE SCALE GENOMIC DNA]</scope>
    <source>
        <strain>ATCC 47054 / DSM 6125 / CFBP 8728 / NCIMB 11950 / KT2440</strain>
    </source>
</reference>
<reference key="2">
    <citation type="journal article" date="2011" name="Mol. Microbiol.">
        <title>Unravelling the gallic acid degradation pathway in bacteria: the gal cluster from Pseudomonas putida.</title>
        <authorList>
            <person name="Nogales J."/>
            <person name="Canales A."/>
            <person name="Jimenez-Barbero J."/>
            <person name="Serra B."/>
            <person name="Pingarron J.M."/>
            <person name="Garcia J.L."/>
            <person name="Diaz E."/>
        </authorList>
    </citation>
    <scope>FUNCTION</scope>
    <source>
        <strain>ATCC 47054 / DSM 6125 / CFBP 8728 / NCIMB 11950 / KT2440</strain>
    </source>
</reference>
<gene>
    <name type="primary">galR</name>
    <name type="ordered locus">PP_2516</name>
</gene>
<accession>Q88JX7</accession>
<feature type="chain" id="PRO_0000418486" description="HTH-type transcriptional regulator GalR">
    <location>
        <begin position="1"/>
        <end position="397"/>
    </location>
</feature>
<feature type="domain" description="HTH lysR-type 1" evidence="1">
    <location>
        <begin position="7"/>
        <end position="64"/>
    </location>
</feature>
<feature type="domain" description="HTH lysR-type 2" evidence="1">
    <location>
        <begin position="99"/>
        <end position="156"/>
    </location>
</feature>
<feature type="DNA-binding region" description="H-T-H motif" evidence="1">
    <location>
        <begin position="24"/>
        <end position="43"/>
    </location>
</feature>
<feature type="DNA-binding region" description="H-T-H motif" evidence="1">
    <location>
        <begin position="116"/>
        <end position="135"/>
    </location>
</feature>
<comment type="function">
    <text evidence="2">Transcriptional regulator for the galBCD and galTAP operons, encoding genes of the gallate degradation pathway.</text>
</comment>
<comment type="similarity">
    <text evidence="3">Belongs to the LysR transcriptional regulatory family.</text>
</comment>
<protein>
    <recommendedName>
        <fullName>HTH-type transcriptional regulator GalR</fullName>
    </recommendedName>
    <alternativeName>
        <fullName>Gallate degradation protein R</fullName>
    </alternativeName>
</protein>
<organism>
    <name type="scientific">Pseudomonas putida (strain ATCC 47054 / DSM 6125 / CFBP 8728 / NCIMB 11950 / KT2440)</name>
    <dbReference type="NCBI Taxonomy" id="160488"/>
    <lineage>
        <taxon>Bacteria</taxon>
        <taxon>Pseudomonadati</taxon>
        <taxon>Pseudomonadota</taxon>
        <taxon>Gammaproteobacteria</taxon>
        <taxon>Pseudomonadales</taxon>
        <taxon>Pseudomonadaceae</taxon>
        <taxon>Pseudomonas</taxon>
    </lineage>
</organism>
<proteinExistence type="inferred from homology"/>
<keyword id="KW-0058">Aromatic hydrocarbons catabolism</keyword>
<keyword id="KW-0238">DNA-binding</keyword>
<keyword id="KW-1185">Reference proteome</keyword>
<keyword id="KW-0677">Repeat</keyword>
<keyword id="KW-0804">Transcription</keyword>
<keyword id="KW-0805">Transcription regulation</keyword>